<accession>B2I6L3</accession>
<protein>
    <recommendedName>
        <fullName evidence="1">Probable cytosol aminopeptidase</fullName>
        <ecNumber evidence="1">3.4.11.1</ecNumber>
    </recommendedName>
    <alternativeName>
        <fullName evidence="1">Leucine aminopeptidase</fullName>
        <shortName evidence="1">LAP</shortName>
        <ecNumber evidence="1">3.4.11.10</ecNumber>
    </alternativeName>
    <alternativeName>
        <fullName evidence="1">Leucyl aminopeptidase</fullName>
    </alternativeName>
</protein>
<comment type="function">
    <text evidence="1">Presumably involved in the processing and regular turnover of intracellular proteins. Catalyzes the removal of unsubstituted N-terminal amino acids from various peptides.</text>
</comment>
<comment type="catalytic activity">
    <reaction evidence="1">
        <text>Release of an N-terminal amino acid, Xaa-|-Yaa-, in which Xaa is preferably Leu, but may be other amino acids including Pro although not Arg or Lys, and Yaa may be Pro. Amino acid amides and methyl esters are also readily hydrolyzed, but rates on arylamides are exceedingly low.</text>
        <dbReference type="EC" id="3.4.11.1"/>
    </reaction>
</comment>
<comment type="catalytic activity">
    <reaction evidence="1">
        <text>Release of an N-terminal amino acid, preferentially leucine, but not glutamic or aspartic acids.</text>
        <dbReference type="EC" id="3.4.11.10"/>
    </reaction>
</comment>
<comment type="cofactor">
    <cofactor evidence="1">
        <name>Mn(2+)</name>
        <dbReference type="ChEBI" id="CHEBI:29035"/>
    </cofactor>
    <text evidence="1">Binds 2 manganese ions per subunit.</text>
</comment>
<comment type="subcellular location">
    <subcellularLocation>
        <location evidence="1">Cytoplasm</location>
    </subcellularLocation>
</comment>
<comment type="similarity">
    <text evidence="1">Belongs to the peptidase M17 family.</text>
</comment>
<evidence type="ECO:0000255" key="1">
    <source>
        <dbReference type="HAMAP-Rule" id="MF_00181"/>
    </source>
</evidence>
<sequence length="491" mass="51669">MALQFQLNQTTPQTVTTDCVIVGIYADKTLSPTAKTLDAASGGRITALTARGDLTGKSGTSALLHDLNGVTAPRVLVVGLGEADKFGAGQYIKAVGNAVRALKDAPVTHALLTLSELPVKDRNAAWNIHQAVIAADHAAYRYTATLGTSRKKAEESGLITLAIHGQETSGLTLGQAIAEGVEYARALGNLPPNICTPAYLAETTAHFAATHPGATCEILDESNMEALGMGALLAVARGSANRPRLIVLKWNGGGDARPYVLVGKGITFDTGGVNLKTQGGIEEMKYDMCGGAAVIGTFVAAVKVRLPLNLIVIVPAVENAIDGNAYRPSDVITSMSGKTIEVGNTDAEGRLILCDALTYAERFKPEALIDVATLTGACMIALGRAATGLMTHHDDLANELLTAGEHVHDRAWRLPLWDEYQGLLDSTFADVYNIGGRWGGAITAGCFLSRFTEGQRWAHLDIAGSASNEGKRGMATGRPVGLLTQWLVDRC</sequence>
<feature type="chain" id="PRO_1000098362" description="Probable cytosol aminopeptidase">
    <location>
        <begin position="1"/>
        <end position="491"/>
    </location>
</feature>
<feature type="active site" evidence="1">
    <location>
        <position position="276"/>
    </location>
</feature>
<feature type="active site" evidence="1">
    <location>
        <position position="350"/>
    </location>
</feature>
<feature type="binding site" evidence="1">
    <location>
        <position position="264"/>
    </location>
    <ligand>
        <name>Mn(2+)</name>
        <dbReference type="ChEBI" id="CHEBI:29035"/>
        <label>2</label>
    </ligand>
</feature>
<feature type="binding site" evidence="1">
    <location>
        <position position="269"/>
    </location>
    <ligand>
        <name>Mn(2+)</name>
        <dbReference type="ChEBI" id="CHEBI:29035"/>
        <label>1</label>
    </ligand>
</feature>
<feature type="binding site" evidence="1">
    <location>
        <position position="269"/>
    </location>
    <ligand>
        <name>Mn(2+)</name>
        <dbReference type="ChEBI" id="CHEBI:29035"/>
        <label>2</label>
    </ligand>
</feature>
<feature type="binding site" evidence="1">
    <location>
        <position position="287"/>
    </location>
    <ligand>
        <name>Mn(2+)</name>
        <dbReference type="ChEBI" id="CHEBI:29035"/>
        <label>2</label>
    </ligand>
</feature>
<feature type="binding site" evidence="1">
    <location>
        <position position="346"/>
    </location>
    <ligand>
        <name>Mn(2+)</name>
        <dbReference type="ChEBI" id="CHEBI:29035"/>
        <label>1</label>
    </ligand>
</feature>
<feature type="binding site" evidence="1">
    <location>
        <position position="348"/>
    </location>
    <ligand>
        <name>Mn(2+)</name>
        <dbReference type="ChEBI" id="CHEBI:29035"/>
        <label>1</label>
    </ligand>
</feature>
<feature type="binding site" evidence="1">
    <location>
        <position position="348"/>
    </location>
    <ligand>
        <name>Mn(2+)</name>
        <dbReference type="ChEBI" id="CHEBI:29035"/>
        <label>2</label>
    </ligand>
</feature>
<dbReference type="EC" id="3.4.11.1" evidence="1"/>
<dbReference type="EC" id="3.4.11.10" evidence="1"/>
<dbReference type="EMBL" id="CP001011">
    <property type="protein sequence ID" value="ACB91555.1"/>
    <property type="molecule type" value="Genomic_DNA"/>
</dbReference>
<dbReference type="RefSeq" id="WP_004087599.1">
    <property type="nucleotide sequence ID" value="NC_010577.1"/>
</dbReference>
<dbReference type="SMR" id="B2I6L3"/>
<dbReference type="MEROPS" id="M17.003"/>
<dbReference type="KEGG" id="xfn:XfasM23_0098"/>
<dbReference type="HOGENOM" id="CLU_013734_2_2_6"/>
<dbReference type="Proteomes" id="UP000001698">
    <property type="component" value="Chromosome"/>
</dbReference>
<dbReference type="GO" id="GO:0005737">
    <property type="term" value="C:cytoplasm"/>
    <property type="evidence" value="ECO:0007669"/>
    <property type="project" value="UniProtKB-SubCell"/>
</dbReference>
<dbReference type="GO" id="GO:0030145">
    <property type="term" value="F:manganese ion binding"/>
    <property type="evidence" value="ECO:0007669"/>
    <property type="project" value="UniProtKB-UniRule"/>
</dbReference>
<dbReference type="GO" id="GO:0070006">
    <property type="term" value="F:metalloaminopeptidase activity"/>
    <property type="evidence" value="ECO:0007669"/>
    <property type="project" value="InterPro"/>
</dbReference>
<dbReference type="GO" id="GO:0006508">
    <property type="term" value="P:proteolysis"/>
    <property type="evidence" value="ECO:0007669"/>
    <property type="project" value="UniProtKB-KW"/>
</dbReference>
<dbReference type="CDD" id="cd00433">
    <property type="entry name" value="Peptidase_M17"/>
    <property type="match status" value="1"/>
</dbReference>
<dbReference type="Gene3D" id="3.40.220.10">
    <property type="entry name" value="Leucine Aminopeptidase, subunit E, domain 1"/>
    <property type="match status" value="1"/>
</dbReference>
<dbReference type="Gene3D" id="3.40.630.10">
    <property type="entry name" value="Zn peptidases"/>
    <property type="match status" value="1"/>
</dbReference>
<dbReference type="HAMAP" id="MF_00181">
    <property type="entry name" value="Cytosol_peptidase_M17"/>
    <property type="match status" value="1"/>
</dbReference>
<dbReference type="InterPro" id="IPR011356">
    <property type="entry name" value="Leucine_aapep/pepB"/>
</dbReference>
<dbReference type="InterPro" id="IPR043472">
    <property type="entry name" value="Macro_dom-like"/>
</dbReference>
<dbReference type="InterPro" id="IPR000819">
    <property type="entry name" value="Peptidase_M17_C"/>
</dbReference>
<dbReference type="InterPro" id="IPR023042">
    <property type="entry name" value="Peptidase_M17_leu_NH2_pept"/>
</dbReference>
<dbReference type="InterPro" id="IPR008283">
    <property type="entry name" value="Peptidase_M17_N"/>
</dbReference>
<dbReference type="NCBIfam" id="NF002074">
    <property type="entry name" value="PRK00913.1-4"/>
    <property type="match status" value="1"/>
</dbReference>
<dbReference type="PANTHER" id="PTHR11963:SF23">
    <property type="entry name" value="CYTOSOL AMINOPEPTIDASE"/>
    <property type="match status" value="1"/>
</dbReference>
<dbReference type="PANTHER" id="PTHR11963">
    <property type="entry name" value="LEUCINE AMINOPEPTIDASE-RELATED"/>
    <property type="match status" value="1"/>
</dbReference>
<dbReference type="Pfam" id="PF00883">
    <property type="entry name" value="Peptidase_M17"/>
    <property type="match status" value="1"/>
</dbReference>
<dbReference type="Pfam" id="PF02789">
    <property type="entry name" value="Peptidase_M17_N"/>
    <property type="match status" value="1"/>
</dbReference>
<dbReference type="PRINTS" id="PR00481">
    <property type="entry name" value="LAMNOPPTDASE"/>
</dbReference>
<dbReference type="SUPFAM" id="SSF52949">
    <property type="entry name" value="Macro domain-like"/>
    <property type="match status" value="1"/>
</dbReference>
<dbReference type="SUPFAM" id="SSF53187">
    <property type="entry name" value="Zn-dependent exopeptidases"/>
    <property type="match status" value="1"/>
</dbReference>
<dbReference type="PROSITE" id="PS00631">
    <property type="entry name" value="CYTOSOL_AP"/>
    <property type="match status" value="1"/>
</dbReference>
<proteinExistence type="inferred from homology"/>
<name>AMPA_XYLF2</name>
<reference key="1">
    <citation type="journal article" date="2010" name="J. Bacteriol.">
        <title>Whole genome sequences of two Xylella fastidiosa strains (M12 and M23) causing almond leaf scorch disease in California.</title>
        <authorList>
            <person name="Chen J."/>
            <person name="Xie G."/>
            <person name="Han S."/>
            <person name="Chertkov O."/>
            <person name="Sims D."/>
            <person name="Civerolo E.L."/>
        </authorList>
    </citation>
    <scope>NUCLEOTIDE SEQUENCE [LARGE SCALE GENOMIC DNA]</scope>
    <source>
        <strain>M23</strain>
    </source>
</reference>
<organism>
    <name type="scientific">Xylella fastidiosa (strain M23)</name>
    <dbReference type="NCBI Taxonomy" id="405441"/>
    <lineage>
        <taxon>Bacteria</taxon>
        <taxon>Pseudomonadati</taxon>
        <taxon>Pseudomonadota</taxon>
        <taxon>Gammaproteobacteria</taxon>
        <taxon>Lysobacterales</taxon>
        <taxon>Lysobacteraceae</taxon>
        <taxon>Xylella</taxon>
    </lineage>
</organism>
<gene>
    <name evidence="1" type="primary">pepA</name>
    <name type="ordered locus">XfasM23_0098</name>
</gene>
<keyword id="KW-0031">Aminopeptidase</keyword>
<keyword id="KW-0963">Cytoplasm</keyword>
<keyword id="KW-0378">Hydrolase</keyword>
<keyword id="KW-0464">Manganese</keyword>
<keyword id="KW-0479">Metal-binding</keyword>
<keyword id="KW-0645">Protease</keyword>